<feature type="chain" id="PRO_1000004312" description="UDP-N-acetylmuramate--L-alanine ligase">
    <location>
        <begin position="1"/>
        <end position="490"/>
    </location>
</feature>
<feature type="binding site" evidence="1">
    <location>
        <begin position="126"/>
        <end position="132"/>
    </location>
    <ligand>
        <name>ATP</name>
        <dbReference type="ChEBI" id="CHEBI:30616"/>
    </ligand>
</feature>
<accession>Q1LSW6</accession>
<reference key="1">
    <citation type="journal article" date="2006" name="PLoS Biol.">
        <title>Metabolic complementarity and genomics of the dual bacterial symbiosis of sharpshooters.</title>
        <authorList>
            <person name="Wu D."/>
            <person name="Daugherty S.C."/>
            <person name="Van Aken S.E."/>
            <person name="Pai G.H."/>
            <person name="Watkins K.L."/>
            <person name="Khouri H."/>
            <person name="Tallon L.J."/>
            <person name="Zaborsky J.M."/>
            <person name="Dunbar H.E."/>
            <person name="Tran P.L."/>
            <person name="Moran N.A."/>
            <person name="Eisen J.A."/>
        </authorList>
    </citation>
    <scope>NUCLEOTIDE SEQUENCE [LARGE SCALE GENOMIC DNA]</scope>
</reference>
<protein>
    <recommendedName>
        <fullName evidence="1">UDP-N-acetylmuramate--L-alanine ligase</fullName>
        <ecNumber evidence="1">6.3.2.8</ecNumber>
    </recommendedName>
    <alternativeName>
        <fullName evidence="1">UDP-N-acetylmuramoyl-L-alanine synthetase</fullName>
    </alternativeName>
</protein>
<sequence length="490" mass="54695">MNYQRLAQLQKLVPQMRQVKRIHFIGIGGVGMSGIAKILLHEGYQISGSDLVQNKVTKHLVALGVSIKFQHIPENVLDANVVVVSSAISIANPEIVAAKKLRIPIITRAEMLAELMRFRYGIAIAGTHGKTTTTAMLASIYLEAGLDPTIVNGGLIKSIGQYARLGYGSYLIAEADESDLSFLHLQPIVTIITNIEADHMENYQGDFNYLKNTFLKFIHKLPFYGKGIMCLDDPVIRDLLPHISRHIITYGFNSKANFRLTNYHQKEAHVSFQLYRQDKPTLRIELNSPGRHNALNAVAAIAVATEEGIADKNILQALFRFKGINRRFDKLGCFSLKKINGKNGVVMLVEDYGHHPTELQATIQSVRIGWPDKRLVMVFQPHRYTRTRDLYEYFVGVLSKVDVLLMLDIYPAGENPIAGIDSKSLCCTIRNTSKLDPIFIHELNKLPVMLAQLLQDNDLVLMQGAGSIGLIASQLAIGKLQTNIRHNPLI</sequence>
<comment type="function">
    <text evidence="1">Cell wall formation.</text>
</comment>
<comment type="catalytic activity">
    <reaction evidence="1">
        <text>UDP-N-acetyl-alpha-D-muramate + L-alanine + ATP = UDP-N-acetyl-alpha-D-muramoyl-L-alanine + ADP + phosphate + H(+)</text>
        <dbReference type="Rhea" id="RHEA:23372"/>
        <dbReference type="ChEBI" id="CHEBI:15378"/>
        <dbReference type="ChEBI" id="CHEBI:30616"/>
        <dbReference type="ChEBI" id="CHEBI:43474"/>
        <dbReference type="ChEBI" id="CHEBI:57972"/>
        <dbReference type="ChEBI" id="CHEBI:70757"/>
        <dbReference type="ChEBI" id="CHEBI:83898"/>
        <dbReference type="ChEBI" id="CHEBI:456216"/>
        <dbReference type="EC" id="6.3.2.8"/>
    </reaction>
</comment>
<comment type="pathway">
    <text evidence="1">Cell wall biogenesis; peptidoglycan biosynthesis.</text>
</comment>
<comment type="subcellular location">
    <subcellularLocation>
        <location evidence="1">Cytoplasm</location>
    </subcellularLocation>
</comment>
<comment type="similarity">
    <text evidence="1">Belongs to the MurCDEF family.</text>
</comment>
<gene>
    <name evidence="1" type="primary">murC</name>
    <name type="ordered locus">BCI_0518</name>
</gene>
<proteinExistence type="inferred from homology"/>
<dbReference type="EC" id="6.3.2.8" evidence="1"/>
<dbReference type="EMBL" id="CP000238">
    <property type="protein sequence ID" value="ABF13791.1"/>
    <property type="molecule type" value="Genomic_DNA"/>
</dbReference>
<dbReference type="RefSeq" id="WP_011520681.1">
    <property type="nucleotide sequence ID" value="NC_007984.1"/>
</dbReference>
<dbReference type="SMR" id="Q1LSW6"/>
<dbReference type="STRING" id="374463.BCI_0518"/>
<dbReference type="KEGG" id="bci:BCI_0518"/>
<dbReference type="HOGENOM" id="CLU_028104_2_2_6"/>
<dbReference type="OrthoDB" id="9804126at2"/>
<dbReference type="UniPathway" id="UPA00219"/>
<dbReference type="Proteomes" id="UP000002427">
    <property type="component" value="Chromosome"/>
</dbReference>
<dbReference type="GO" id="GO:0005737">
    <property type="term" value="C:cytoplasm"/>
    <property type="evidence" value="ECO:0007669"/>
    <property type="project" value="UniProtKB-SubCell"/>
</dbReference>
<dbReference type="GO" id="GO:0005524">
    <property type="term" value="F:ATP binding"/>
    <property type="evidence" value="ECO:0007669"/>
    <property type="project" value="UniProtKB-UniRule"/>
</dbReference>
<dbReference type="GO" id="GO:0008763">
    <property type="term" value="F:UDP-N-acetylmuramate-L-alanine ligase activity"/>
    <property type="evidence" value="ECO:0007669"/>
    <property type="project" value="UniProtKB-UniRule"/>
</dbReference>
<dbReference type="GO" id="GO:0051301">
    <property type="term" value="P:cell division"/>
    <property type="evidence" value="ECO:0007669"/>
    <property type="project" value="UniProtKB-KW"/>
</dbReference>
<dbReference type="GO" id="GO:0071555">
    <property type="term" value="P:cell wall organization"/>
    <property type="evidence" value="ECO:0007669"/>
    <property type="project" value="UniProtKB-KW"/>
</dbReference>
<dbReference type="GO" id="GO:0009252">
    <property type="term" value="P:peptidoglycan biosynthetic process"/>
    <property type="evidence" value="ECO:0007669"/>
    <property type="project" value="UniProtKB-UniRule"/>
</dbReference>
<dbReference type="GO" id="GO:0008360">
    <property type="term" value="P:regulation of cell shape"/>
    <property type="evidence" value="ECO:0007669"/>
    <property type="project" value="UniProtKB-KW"/>
</dbReference>
<dbReference type="FunFam" id="3.40.1190.10:FF:000001">
    <property type="entry name" value="UDP-N-acetylmuramate--L-alanine ligase"/>
    <property type="match status" value="1"/>
</dbReference>
<dbReference type="FunFam" id="3.40.50.720:FF:000046">
    <property type="entry name" value="UDP-N-acetylmuramate--L-alanine ligase"/>
    <property type="match status" value="1"/>
</dbReference>
<dbReference type="Gene3D" id="3.90.190.20">
    <property type="entry name" value="Mur ligase, C-terminal domain"/>
    <property type="match status" value="1"/>
</dbReference>
<dbReference type="Gene3D" id="3.40.1190.10">
    <property type="entry name" value="Mur-like, catalytic domain"/>
    <property type="match status" value="1"/>
</dbReference>
<dbReference type="Gene3D" id="3.40.50.720">
    <property type="entry name" value="NAD(P)-binding Rossmann-like Domain"/>
    <property type="match status" value="1"/>
</dbReference>
<dbReference type="HAMAP" id="MF_00046">
    <property type="entry name" value="MurC"/>
    <property type="match status" value="1"/>
</dbReference>
<dbReference type="InterPro" id="IPR036565">
    <property type="entry name" value="Mur-like_cat_sf"/>
</dbReference>
<dbReference type="InterPro" id="IPR004101">
    <property type="entry name" value="Mur_ligase_C"/>
</dbReference>
<dbReference type="InterPro" id="IPR036615">
    <property type="entry name" value="Mur_ligase_C_dom_sf"/>
</dbReference>
<dbReference type="InterPro" id="IPR013221">
    <property type="entry name" value="Mur_ligase_cen"/>
</dbReference>
<dbReference type="InterPro" id="IPR000713">
    <property type="entry name" value="Mur_ligase_N"/>
</dbReference>
<dbReference type="InterPro" id="IPR050061">
    <property type="entry name" value="MurCDEF_pg_biosynth"/>
</dbReference>
<dbReference type="InterPro" id="IPR005758">
    <property type="entry name" value="UDP-N-AcMur_Ala_ligase_MurC"/>
</dbReference>
<dbReference type="NCBIfam" id="TIGR01082">
    <property type="entry name" value="murC"/>
    <property type="match status" value="1"/>
</dbReference>
<dbReference type="PANTHER" id="PTHR43445:SF3">
    <property type="entry name" value="UDP-N-ACETYLMURAMATE--L-ALANINE LIGASE"/>
    <property type="match status" value="1"/>
</dbReference>
<dbReference type="PANTHER" id="PTHR43445">
    <property type="entry name" value="UDP-N-ACETYLMURAMATE--L-ALANINE LIGASE-RELATED"/>
    <property type="match status" value="1"/>
</dbReference>
<dbReference type="Pfam" id="PF01225">
    <property type="entry name" value="Mur_ligase"/>
    <property type="match status" value="1"/>
</dbReference>
<dbReference type="Pfam" id="PF02875">
    <property type="entry name" value="Mur_ligase_C"/>
    <property type="match status" value="1"/>
</dbReference>
<dbReference type="Pfam" id="PF08245">
    <property type="entry name" value="Mur_ligase_M"/>
    <property type="match status" value="1"/>
</dbReference>
<dbReference type="SUPFAM" id="SSF51984">
    <property type="entry name" value="MurCD N-terminal domain"/>
    <property type="match status" value="1"/>
</dbReference>
<dbReference type="SUPFAM" id="SSF53623">
    <property type="entry name" value="MurD-like peptide ligases, catalytic domain"/>
    <property type="match status" value="1"/>
</dbReference>
<dbReference type="SUPFAM" id="SSF53244">
    <property type="entry name" value="MurD-like peptide ligases, peptide-binding domain"/>
    <property type="match status" value="1"/>
</dbReference>
<name>MURC_BAUCH</name>
<keyword id="KW-0067">ATP-binding</keyword>
<keyword id="KW-0131">Cell cycle</keyword>
<keyword id="KW-0132">Cell division</keyword>
<keyword id="KW-0133">Cell shape</keyword>
<keyword id="KW-0961">Cell wall biogenesis/degradation</keyword>
<keyword id="KW-0963">Cytoplasm</keyword>
<keyword id="KW-0436">Ligase</keyword>
<keyword id="KW-0547">Nucleotide-binding</keyword>
<keyword id="KW-0573">Peptidoglycan synthesis</keyword>
<keyword id="KW-1185">Reference proteome</keyword>
<evidence type="ECO:0000255" key="1">
    <source>
        <dbReference type="HAMAP-Rule" id="MF_00046"/>
    </source>
</evidence>
<organism>
    <name type="scientific">Baumannia cicadellinicola subsp. Homalodisca coagulata</name>
    <dbReference type="NCBI Taxonomy" id="374463"/>
    <lineage>
        <taxon>Bacteria</taxon>
        <taxon>Pseudomonadati</taxon>
        <taxon>Pseudomonadota</taxon>
        <taxon>Gammaproteobacteria</taxon>
        <taxon>Candidatus Palibaumannia</taxon>
    </lineage>
</organism>